<comment type="function">
    <text evidence="7 8">Deubiquitinating enzyme that cleaves both 'Lys-48'-linked and 'Lys-63'-linked poly-ubiquitin chains (in vitro) (PubMed:21118805). Acts as a deubiquitinating enzyme for the transcription factor KLF5, playing a role in the regulation of KLF5 stability (PubMed:26079537).</text>
</comment>
<comment type="catalytic activity">
    <reaction evidence="7 8">
        <text>Thiol-dependent hydrolysis of ester, thioester, amide, peptide and isopeptide bonds formed by the C-terminal Gly of ubiquitin (a 76-residue protein attached to proteins as an intracellular targeting signal).</text>
        <dbReference type="EC" id="3.4.19.12"/>
    </reaction>
</comment>
<comment type="subcellular location">
    <subcellularLocation>
        <location evidence="1">Nucleus</location>
    </subcellularLocation>
</comment>
<comment type="tissue specificity">
    <text evidence="5">Widely expressed.</text>
</comment>
<comment type="miscellaneous">
    <text evidence="11">Identified only in primates. ATXN3L appeared to have arisen relatively recently, just prior to the first major division between hominids and old world monkeys.</text>
</comment>
<proteinExistence type="evidence at protein level"/>
<sequence>MDFIFHEKQEGFLCAQHCLNNLLQGEYFSPVELASIAHQLDEEERMRMAEGGVTSEEYLAFLQQPSENMDDTGFFSIQVISNALKFWGLEIIHFNNPEYQKLGIDPINERSFICNYKQHWFTIRKFGKHWFNLNSLLAGPELISDTCLANFLARLQQQAYSVFVVKGDLPDCEADQLLQIISVEEMDTPKLNGKKLVKQKEHRVYKTVLEKVSEESDESGTSDQDEEDFQRALELSRQETNREDEHLRSTIELSMQGSSGNTSQDLPKTSCVTPASEQPKKIKEDYFEKHQQEQKQQQQQSDLPGHSSYLHERPTTSSRAIESDLSDDISEGTVQAAVDTILEIMRKNLKIKGEK</sequence>
<accession>Q9H3M9</accession>
<accession>B2RNY8</accession>
<gene>
    <name evidence="12" type="primary">ATXN3L</name>
    <name type="synonym">ATX3L</name>
    <name type="synonym">MJDL</name>
</gene>
<organism>
    <name type="scientific">Homo sapiens</name>
    <name type="common">Human</name>
    <dbReference type="NCBI Taxonomy" id="9606"/>
    <lineage>
        <taxon>Eukaryota</taxon>
        <taxon>Metazoa</taxon>
        <taxon>Chordata</taxon>
        <taxon>Craniata</taxon>
        <taxon>Vertebrata</taxon>
        <taxon>Euteleostomi</taxon>
        <taxon>Mammalia</taxon>
        <taxon>Eutheria</taxon>
        <taxon>Euarchontoglires</taxon>
        <taxon>Primates</taxon>
        <taxon>Haplorrhini</taxon>
        <taxon>Catarrhini</taxon>
        <taxon>Hominidae</taxon>
        <taxon>Homo</taxon>
    </lineage>
</organism>
<dbReference type="EC" id="3.4.19.12" evidence="7 8"/>
<dbReference type="EMBL" id="AC004674">
    <property type="status" value="NOT_ANNOTATED_CDS"/>
    <property type="molecule type" value="Genomic_DNA"/>
</dbReference>
<dbReference type="EMBL" id="CH471074">
    <property type="protein sequence ID" value="EAW98819.1"/>
    <property type="molecule type" value="Genomic_DNA"/>
</dbReference>
<dbReference type="EMBL" id="BC137186">
    <property type="protein sequence ID" value="AAI37187.1"/>
    <property type="molecule type" value="mRNA"/>
</dbReference>
<dbReference type="EMBL" id="BC137187">
    <property type="protein sequence ID" value="AAI37188.1"/>
    <property type="molecule type" value="mRNA"/>
</dbReference>
<dbReference type="EMBL" id="AB050195">
    <property type="protein sequence ID" value="BAB18799.1"/>
    <property type="molecule type" value="mRNA"/>
</dbReference>
<dbReference type="CCDS" id="CCDS48080.1"/>
<dbReference type="RefSeq" id="NP_001129467.1">
    <property type="nucleotide sequence ID" value="NM_001135995.2"/>
</dbReference>
<dbReference type="PDB" id="3O65">
    <property type="method" value="X-ray"/>
    <property type="resolution" value="2.70 A"/>
    <property type="chains" value="A/C/E/G=1-190"/>
</dbReference>
<dbReference type="PDBsum" id="3O65"/>
<dbReference type="SMR" id="Q9H3M9"/>
<dbReference type="BioGRID" id="124954">
    <property type="interactions" value="11"/>
</dbReference>
<dbReference type="FunCoup" id="Q9H3M9">
    <property type="interactions" value="173"/>
</dbReference>
<dbReference type="IntAct" id="Q9H3M9">
    <property type="interactions" value="2"/>
</dbReference>
<dbReference type="STRING" id="9606.ENSP00000369996"/>
<dbReference type="BindingDB" id="Q9H3M9"/>
<dbReference type="ChEMBL" id="CHEMBL4630855"/>
<dbReference type="MEROPS" id="C86.002"/>
<dbReference type="GlyGen" id="Q9H3M9">
    <property type="glycosylation" value="1 site"/>
</dbReference>
<dbReference type="iPTMnet" id="Q9H3M9"/>
<dbReference type="PhosphoSitePlus" id="Q9H3M9"/>
<dbReference type="BioMuta" id="ATXN3L"/>
<dbReference type="DMDM" id="122055954"/>
<dbReference type="jPOST" id="Q9H3M9"/>
<dbReference type="MassIVE" id="Q9H3M9"/>
<dbReference type="PaxDb" id="9606-ENSP00000369996"/>
<dbReference type="PeptideAtlas" id="Q9H3M9"/>
<dbReference type="ProteomicsDB" id="80732"/>
<dbReference type="Antibodypedia" id="23827">
    <property type="antibodies" value="54 antibodies from 15 providers"/>
</dbReference>
<dbReference type="DNASU" id="92552"/>
<dbReference type="Ensembl" id="ENST00000380622.5">
    <property type="protein sequence ID" value="ENSP00000369996.2"/>
    <property type="gene ID" value="ENSG00000123594.7"/>
</dbReference>
<dbReference type="GeneID" id="92552"/>
<dbReference type="KEGG" id="hsa:92552"/>
<dbReference type="MANE-Select" id="ENST00000380622.5">
    <property type="protein sequence ID" value="ENSP00000369996.2"/>
    <property type="RefSeq nucleotide sequence ID" value="NM_001135995.2"/>
    <property type="RefSeq protein sequence ID" value="NP_001129467.1"/>
</dbReference>
<dbReference type="UCSC" id="uc010ned.4">
    <property type="organism name" value="human"/>
</dbReference>
<dbReference type="AGR" id="HGNC:24173"/>
<dbReference type="CTD" id="92552"/>
<dbReference type="DisGeNET" id="92552"/>
<dbReference type="GeneCards" id="ATXN3L"/>
<dbReference type="HGNC" id="HGNC:24173">
    <property type="gene designation" value="ATXN3L"/>
</dbReference>
<dbReference type="HPA" id="ENSG00000123594">
    <property type="expression patterns" value="Tissue enriched (testis)"/>
</dbReference>
<dbReference type="MIM" id="300920">
    <property type="type" value="gene"/>
</dbReference>
<dbReference type="neXtProt" id="NX_Q9H3M9"/>
<dbReference type="OpenTargets" id="ENSG00000123594"/>
<dbReference type="PharmGKB" id="PA134884147"/>
<dbReference type="VEuPathDB" id="HostDB:ENSG00000123594"/>
<dbReference type="eggNOG" id="KOG2935">
    <property type="taxonomic scope" value="Eukaryota"/>
</dbReference>
<dbReference type="GeneTree" id="ENSGT00390000001830"/>
<dbReference type="HOGENOM" id="CLU_031228_1_0_1"/>
<dbReference type="InParanoid" id="Q9H3M9"/>
<dbReference type="OMA" id="WGLEIIH"/>
<dbReference type="OrthoDB" id="9485314at2759"/>
<dbReference type="PAN-GO" id="Q9H3M9">
    <property type="GO annotations" value="3 GO annotations based on evolutionary models"/>
</dbReference>
<dbReference type="PhylomeDB" id="Q9H3M9"/>
<dbReference type="TreeFam" id="TF314228"/>
<dbReference type="PathwayCommons" id="Q9H3M9"/>
<dbReference type="Reactome" id="R-HSA-5689877">
    <property type="pathway name" value="Josephin domain DUBs"/>
</dbReference>
<dbReference type="SignaLink" id="Q9H3M9"/>
<dbReference type="BioGRID-ORCS" id="92552">
    <property type="hits" value="10 hits in 768 CRISPR screens"/>
</dbReference>
<dbReference type="EvolutionaryTrace" id="Q9H3M9"/>
<dbReference type="GenomeRNAi" id="92552"/>
<dbReference type="Pharos" id="Q9H3M9">
    <property type="development level" value="Tbio"/>
</dbReference>
<dbReference type="PRO" id="PR:Q9H3M9"/>
<dbReference type="Proteomes" id="UP000005640">
    <property type="component" value="Chromosome X"/>
</dbReference>
<dbReference type="RNAct" id="Q9H3M9">
    <property type="molecule type" value="protein"/>
</dbReference>
<dbReference type="Bgee" id="ENSG00000123594">
    <property type="expression patterns" value="Expressed in sperm and 18 other cell types or tissues"/>
</dbReference>
<dbReference type="ExpressionAtlas" id="Q9H3M9">
    <property type="expression patterns" value="baseline and differential"/>
</dbReference>
<dbReference type="GO" id="GO:0005829">
    <property type="term" value="C:cytosol"/>
    <property type="evidence" value="ECO:0000304"/>
    <property type="project" value="Reactome"/>
</dbReference>
<dbReference type="GO" id="GO:0005634">
    <property type="term" value="C:nucleus"/>
    <property type="evidence" value="ECO:0000318"/>
    <property type="project" value="GO_Central"/>
</dbReference>
<dbReference type="GO" id="GO:0004843">
    <property type="term" value="F:cysteine-type deubiquitinase activity"/>
    <property type="evidence" value="ECO:0000314"/>
    <property type="project" value="UniProtKB"/>
</dbReference>
<dbReference type="GO" id="GO:1904262">
    <property type="term" value="P:negative regulation of TORC1 signaling"/>
    <property type="evidence" value="ECO:0000318"/>
    <property type="project" value="GO_Central"/>
</dbReference>
<dbReference type="GO" id="GO:1904294">
    <property type="term" value="P:positive regulation of ERAD pathway"/>
    <property type="evidence" value="ECO:0000318"/>
    <property type="project" value="GO_Central"/>
</dbReference>
<dbReference type="GO" id="GO:0043161">
    <property type="term" value="P:proteasome-mediated ubiquitin-dependent protein catabolic process"/>
    <property type="evidence" value="ECO:0000318"/>
    <property type="project" value="GO_Central"/>
</dbReference>
<dbReference type="GO" id="GO:0016579">
    <property type="term" value="P:protein deubiquitination"/>
    <property type="evidence" value="ECO:0000314"/>
    <property type="project" value="UniProtKB"/>
</dbReference>
<dbReference type="GO" id="GO:0006515">
    <property type="term" value="P:protein quality control for misfolded or incompletely synthesized proteins"/>
    <property type="evidence" value="ECO:0000318"/>
    <property type="project" value="GO_Central"/>
</dbReference>
<dbReference type="FunFam" id="3.90.70.40:FF:000005">
    <property type="entry name" value="Ataxin 3"/>
    <property type="match status" value="1"/>
</dbReference>
<dbReference type="FunFam" id="1.10.287.10:FF:000005">
    <property type="entry name" value="ataxin-3 isoform X1"/>
    <property type="match status" value="1"/>
</dbReference>
<dbReference type="Gene3D" id="3.90.70.40">
    <property type="match status" value="1"/>
</dbReference>
<dbReference type="Gene3D" id="1.10.287.10">
    <property type="entry name" value="S15/NS1, RNA-binding"/>
    <property type="match status" value="1"/>
</dbReference>
<dbReference type="InterPro" id="IPR033865">
    <property type="entry name" value="Ataxin-3"/>
</dbReference>
<dbReference type="InterPro" id="IPR006155">
    <property type="entry name" value="Josephin"/>
</dbReference>
<dbReference type="InterPro" id="IPR003903">
    <property type="entry name" value="UIM_dom"/>
</dbReference>
<dbReference type="PANTHER" id="PTHR14159">
    <property type="entry name" value="ATAXIN-3-RELATED"/>
    <property type="match status" value="1"/>
</dbReference>
<dbReference type="PANTHER" id="PTHR14159:SF0">
    <property type="entry name" value="ATAXIN-3-RELATED"/>
    <property type="match status" value="1"/>
</dbReference>
<dbReference type="Pfam" id="PF02099">
    <property type="entry name" value="Josephin"/>
    <property type="match status" value="1"/>
</dbReference>
<dbReference type="Pfam" id="PF16619">
    <property type="entry name" value="SUIM_assoc"/>
    <property type="match status" value="1"/>
</dbReference>
<dbReference type="Pfam" id="PF02809">
    <property type="entry name" value="UIM"/>
    <property type="match status" value="2"/>
</dbReference>
<dbReference type="PRINTS" id="PR01233">
    <property type="entry name" value="JOSEPHIN"/>
</dbReference>
<dbReference type="SMART" id="SM01246">
    <property type="entry name" value="Josephin"/>
    <property type="match status" value="1"/>
</dbReference>
<dbReference type="SMART" id="SM00726">
    <property type="entry name" value="UIM"/>
    <property type="match status" value="2"/>
</dbReference>
<dbReference type="PROSITE" id="PS50957">
    <property type="entry name" value="JOSEPHIN"/>
    <property type="match status" value="1"/>
</dbReference>
<dbReference type="PROSITE" id="PS50330">
    <property type="entry name" value="UIM"/>
    <property type="match status" value="1"/>
</dbReference>
<evidence type="ECO:0000250" key="1"/>
<evidence type="ECO:0000255" key="2">
    <source>
        <dbReference type="PROSITE-ProRule" id="PRU00213"/>
    </source>
</evidence>
<evidence type="ECO:0000255" key="3">
    <source>
        <dbReference type="PROSITE-ProRule" id="PRU00331"/>
    </source>
</evidence>
<evidence type="ECO:0000256" key="4">
    <source>
        <dbReference type="SAM" id="MobiDB-lite"/>
    </source>
</evidence>
<evidence type="ECO:0000269" key="5">
    <source>
    </source>
</evidence>
<evidence type="ECO:0000269" key="6">
    <source>
    </source>
</evidence>
<evidence type="ECO:0000269" key="7">
    <source>
    </source>
</evidence>
<evidence type="ECO:0000269" key="8">
    <source>
    </source>
</evidence>
<evidence type="ECO:0000269" key="9">
    <source ref="2"/>
</evidence>
<evidence type="ECO:0000305" key="10"/>
<evidence type="ECO:0000305" key="11">
    <source>
    </source>
</evidence>
<evidence type="ECO:0000312" key="12">
    <source>
        <dbReference type="HGNC" id="HGNC:24173"/>
    </source>
</evidence>
<evidence type="ECO:0007744" key="13">
    <source>
        <dbReference type="PDB" id="3O65"/>
    </source>
</evidence>
<evidence type="ECO:0007829" key="14">
    <source>
        <dbReference type="PDB" id="3O65"/>
    </source>
</evidence>
<protein>
    <recommendedName>
        <fullName evidence="10">Ataxin-3-like protein</fullName>
        <ecNumber evidence="7 8">3.4.19.12</ecNumber>
    </recommendedName>
    <alternativeName>
        <fullName>Machado-Joseph disease protein 1-like</fullName>
    </alternativeName>
</protein>
<name>ATX3L_HUMAN</name>
<reference key="1">
    <citation type="journal article" date="2005" name="Nature">
        <title>The DNA sequence of the human X chromosome.</title>
        <authorList>
            <person name="Ross M.T."/>
            <person name="Grafham D.V."/>
            <person name="Coffey A.J."/>
            <person name="Scherer S."/>
            <person name="McLay K."/>
            <person name="Muzny D."/>
            <person name="Platzer M."/>
            <person name="Howell G.R."/>
            <person name="Burrows C."/>
            <person name="Bird C.P."/>
            <person name="Frankish A."/>
            <person name="Lovell F.L."/>
            <person name="Howe K.L."/>
            <person name="Ashurst J.L."/>
            <person name="Fulton R.S."/>
            <person name="Sudbrak R."/>
            <person name="Wen G."/>
            <person name="Jones M.C."/>
            <person name="Hurles M.E."/>
            <person name="Andrews T.D."/>
            <person name="Scott C.E."/>
            <person name="Searle S."/>
            <person name="Ramser J."/>
            <person name="Whittaker A."/>
            <person name="Deadman R."/>
            <person name="Carter N.P."/>
            <person name="Hunt S.E."/>
            <person name="Chen R."/>
            <person name="Cree A."/>
            <person name="Gunaratne P."/>
            <person name="Havlak P."/>
            <person name="Hodgson A."/>
            <person name="Metzker M.L."/>
            <person name="Richards S."/>
            <person name="Scott G."/>
            <person name="Steffen D."/>
            <person name="Sodergren E."/>
            <person name="Wheeler D.A."/>
            <person name="Worley K.C."/>
            <person name="Ainscough R."/>
            <person name="Ambrose K.D."/>
            <person name="Ansari-Lari M.A."/>
            <person name="Aradhya S."/>
            <person name="Ashwell R.I."/>
            <person name="Babbage A.K."/>
            <person name="Bagguley C.L."/>
            <person name="Ballabio A."/>
            <person name="Banerjee R."/>
            <person name="Barker G.E."/>
            <person name="Barlow K.F."/>
            <person name="Barrett I.P."/>
            <person name="Bates K.N."/>
            <person name="Beare D.M."/>
            <person name="Beasley H."/>
            <person name="Beasley O."/>
            <person name="Beck A."/>
            <person name="Bethel G."/>
            <person name="Blechschmidt K."/>
            <person name="Brady N."/>
            <person name="Bray-Allen S."/>
            <person name="Bridgeman A.M."/>
            <person name="Brown A.J."/>
            <person name="Brown M.J."/>
            <person name="Bonnin D."/>
            <person name="Bruford E.A."/>
            <person name="Buhay C."/>
            <person name="Burch P."/>
            <person name="Burford D."/>
            <person name="Burgess J."/>
            <person name="Burrill W."/>
            <person name="Burton J."/>
            <person name="Bye J.M."/>
            <person name="Carder C."/>
            <person name="Carrel L."/>
            <person name="Chako J."/>
            <person name="Chapman J.C."/>
            <person name="Chavez D."/>
            <person name="Chen E."/>
            <person name="Chen G."/>
            <person name="Chen Y."/>
            <person name="Chen Z."/>
            <person name="Chinault C."/>
            <person name="Ciccodicola A."/>
            <person name="Clark S.Y."/>
            <person name="Clarke G."/>
            <person name="Clee C.M."/>
            <person name="Clegg S."/>
            <person name="Clerc-Blankenburg K."/>
            <person name="Clifford K."/>
            <person name="Cobley V."/>
            <person name="Cole C.G."/>
            <person name="Conquer J.S."/>
            <person name="Corby N."/>
            <person name="Connor R.E."/>
            <person name="David R."/>
            <person name="Davies J."/>
            <person name="Davis C."/>
            <person name="Davis J."/>
            <person name="Delgado O."/>
            <person name="Deshazo D."/>
            <person name="Dhami P."/>
            <person name="Ding Y."/>
            <person name="Dinh H."/>
            <person name="Dodsworth S."/>
            <person name="Draper H."/>
            <person name="Dugan-Rocha S."/>
            <person name="Dunham A."/>
            <person name="Dunn M."/>
            <person name="Durbin K.J."/>
            <person name="Dutta I."/>
            <person name="Eades T."/>
            <person name="Ellwood M."/>
            <person name="Emery-Cohen A."/>
            <person name="Errington H."/>
            <person name="Evans K.L."/>
            <person name="Faulkner L."/>
            <person name="Francis F."/>
            <person name="Frankland J."/>
            <person name="Fraser A.E."/>
            <person name="Galgoczy P."/>
            <person name="Gilbert J."/>
            <person name="Gill R."/>
            <person name="Gloeckner G."/>
            <person name="Gregory S.G."/>
            <person name="Gribble S."/>
            <person name="Griffiths C."/>
            <person name="Grocock R."/>
            <person name="Gu Y."/>
            <person name="Gwilliam R."/>
            <person name="Hamilton C."/>
            <person name="Hart E.A."/>
            <person name="Hawes A."/>
            <person name="Heath P.D."/>
            <person name="Heitmann K."/>
            <person name="Hennig S."/>
            <person name="Hernandez J."/>
            <person name="Hinzmann B."/>
            <person name="Ho S."/>
            <person name="Hoffs M."/>
            <person name="Howden P.J."/>
            <person name="Huckle E.J."/>
            <person name="Hume J."/>
            <person name="Hunt P.J."/>
            <person name="Hunt A.R."/>
            <person name="Isherwood J."/>
            <person name="Jacob L."/>
            <person name="Johnson D."/>
            <person name="Jones S."/>
            <person name="de Jong P.J."/>
            <person name="Joseph S.S."/>
            <person name="Keenan S."/>
            <person name="Kelly S."/>
            <person name="Kershaw J.K."/>
            <person name="Khan Z."/>
            <person name="Kioschis P."/>
            <person name="Klages S."/>
            <person name="Knights A.J."/>
            <person name="Kosiura A."/>
            <person name="Kovar-Smith C."/>
            <person name="Laird G.K."/>
            <person name="Langford C."/>
            <person name="Lawlor S."/>
            <person name="Leversha M."/>
            <person name="Lewis L."/>
            <person name="Liu W."/>
            <person name="Lloyd C."/>
            <person name="Lloyd D.M."/>
            <person name="Loulseged H."/>
            <person name="Loveland J.E."/>
            <person name="Lovell J.D."/>
            <person name="Lozado R."/>
            <person name="Lu J."/>
            <person name="Lyne R."/>
            <person name="Ma J."/>
            <person name="Maheshwari M."/>
            <person name="Matthews L.H."/>
            <person name="McDowall J."/>
            <person name="McLaren S."/>
            <person name="McMurray A."/>
            <person name="Meidl P."/>
            <person name="Meitinger T."/>
            <person name="Milne S."/>
            <person name="Miner G."/>
            <person name="Mistry S.L."/>
            <person name="Morgan M."/>
            <person name="Morris S."/>
            <person name="Mueller I."/>
            <person name="Mullikin J.C."/>
            <person name="Nguyen N."/>
            <person name="Nordsiek G."/>
            <person name="Nyakatura G."/>
            <person name="O'dell C.N."/>
            <person name="Okwuonu G."/>
            <person name="Palmer S."/>
            <person name="Pandian R."/>
            <person name="Parker D."/>
            <person name="Parrish J."/>
            <person name="Pasternak S."/>
            <person name="Patel D."/>
            <person name="Pearce A.V."/>
            <person name="Pearson D.M."/>
            <person name="Pelan S.E."/>
            <person name="Perez L."/>
            <person name="Porter K.M."/>
            <person name="Ramsey Y."/>
            <person name="Reichwald K."/>
            <person name="Rhodes S."/>
            <person name="Ridler K.A."/>
            <person name="Schlessinger D."/>
            <person name="Schueler M.G."/>
            <person name="Sehra H.K."/>
            <person name="Shaw-Smith C."/>
            <person name="Shen H."/>
            <person name="Sheridan E.M."/>
            <person name="Shownkeen R."/>
            <person name="Skuce C.D."/>
            <person name="Smith M.L."/>
            <person name="Sotheran E.C."/>
            <person name="Steingruber H.E."/>
            <person name="Steward C.A."/>
            <person name="Storey R."/>
            <person name="Swann R.M."/>
            <person name="Swarbreck D."/>
            <person name="Tabor P.E."/>
            <person name="Taudien S."/>
            <person name="Taylor T."/>
            <person name="Teague B."/>
            <person name="Thomas K."/>
            <person name="Thorpe A."/>
            <person name="Timms K."/>
            <person name="Tracey A."/>
            <person name="Trevanion S."/>
            <person name="Tromans A.C."/>
            <person name="d'Urso M."/>
            <person name="Verduzco D."/>
            <person name="Villasana D."/>
            <person name="Waldron L."/>
            <person name="Wall M."/>
            <person name="Wang Q."/>
            <person name="Warren J."/>
            <person name="Warry G.L."/>
            <person name="Wei X."/>
            <person name="West A."/>
            <person name="Whitehead S.L."/>
            <person name="Whiteley M.N."/>
            <person name="Wilkinson J.E."/>
            <person name="Willey D.L."/>
            <person name="Williams G."/>
            <person name="Williams L."/>
            <person name="Williamson A."/>
            <person name="Williamson H."/>
            <person name="Wilming L."/>
            <person name="Woodmansey R.L."/>
            <person name="Wray P.W."/>
            <person name="Yen J."/>
            <person name="Zhang J."/>
            <person name="Zhou J."/>
            <person name="Zoghbi H."/>
            <person name="Zorilla S."/>
            <person name="Buck D."/>
            <person name="Reinhardt R."/>
            <person name="Poustka A."/>
            <person name="Rosenthal A."/>
            <person name="Lehrach H."/>
            <person name="Meindl A."/>
            <person name="Minx P.J."/>
            <person name="Hillier L.W."/>
            <person name="Willard H.F."/>
            <person name="Wilson R.K."/>
            <person name="Waterston R.H."/>
            <person name="Rice C.M."/>
            <person name="Vaudin M."/>
            <person name="Coulson A."/>
            <person name="Nelson D.L."/>
            <person name="Weinstock G."/>
            <person name="Sulston J.E."/>
            <person name="Durbin R.M."/>
            <person name="Hubbard T."/>
            <person name="Gibbs R.A."/>
            <person name="Beck S."/>
            <person name="Rogers J."/>
            <person name="Bentley D.R."/>
        </authorList>
    </citation>
    <scope>NUCLEOTIDE SEQUENCE [LARGE SCALE GENOMIC DNA]</scope>
</reference>
<reference key="2">
    <citation type="submission" date="2005-07" db="EMBL/GenBank/DDBJ databases">
        <authorList>
            <person name="Mural R.J."/>
            <person name="Istrail S."/>
            <person name="Sutton G.G."/>
            <person name="Florea L."/>
            <person name="Halpern A.L."/>
            <person name="Mobarry C.M."/>
            <person name="Lippert R."/>
            <person name="Walenz B."/>
            <person name="Shatkay H."/>
            <person name="Dew I."/>
            <person name="Miller J.R."/>
            <person name="Flanigan M.J."/>
            <person name="Edwards N.J."/>
            <person name="Bolanos R."/>
            <person name="Fasulo D."/>
            <person name="Halldorsson B.V."/>
            <person name="Hannenhalli S."/>
            <person name="Turner R."/>
            <person name="Yooseph S."/>
            <person name="Lu F."/>
            <person name="Nusskern D.R."/>
            <person name="Shue B.C."/>
            <person name="Zheng X.H."/>
            <person name="Zhong F."/>
            <person name="Delcher A.L."/>
            <person name="Huson D.H."/>
            <person name="Kravitz S.A."/>
            <person name="Mouchard L."/>
            <person name="Reinert K."/>
            <person name="Remington K.A."/>
            <person name="Clark A.G."/>
            <person name="Waterman M.S."/>
            <person name="Eichler E.E."/>
            <person name="Adams M.D."/>
            <person name="Hunkapiller M.W."/>
            <person name="Myers E.W."/>
            <person name="Venter J.C."/>
        </authorList>
    </citation>
    <scope>NUCLEOTIDE SEQUENCE [LARGE SCALE GENOMIC DNA]</scope>
    <scope>VARIANT ASP-332</scope>
</reference>
<reference key="3">
    <citation type="journal article" date="2004" name="Genome Res.">
        <title>The status, quality, and expansion of the NIH full-length cDNA project: the Mammalian Gene Collection (MGC).</title>
        <authorList>
            <consortium name="The MGC Project Team"/>
        </authorList>
    </citation>
    <scope>NUCLEOTIDE SEQUENCE [LARGE SCALE MRNA]</scope>
    <scope>VARIANT ASP-332</scope>
</reference>
<reference key="4">
    <citation type="journal article" date="2001" name="J. Hum. Genet.">
        <title>The genomic structure and expression of MJD, the Machado-Joseph disease gene.</title>
        <authorList>
            <person name="Ichikawa Y."/>
            <person name="Goto J."/>
            <person name="Hattori M."/>
            <person name="Toyoda A."/>
            <person name="Ishii K."/>
            <person name="Jeong S.-Y."/>
            <person name="Hashida H."/>
            <person name="Masuda N."/>
            <person name="Ogata K."/>
            <person name="Kasai F."/>
            <person name="Hirai M."/>
            <person name="Maciel P."/>
            <person name="Rouleau G.A."/>
            <person name="Sakaki Y."/>
            <person name="Kanazawa I."/>
        </authorList>
    </citation>
    <scope>NUCLEOTIDE SEQUENCE [MRNA] OF 10-355</scope>
    <scope>VARIANT ASP-332</scope>
    <scope>TISSUE SPECIFICITY</scope>
</reference>
<reference key="5">
    <citation type="journal article" date="2011" name="J. Biol. Chem.">
        <title>Crystal structure of a Josephin-ubiquitin complex: evolutionary restraints on ataxin-3 deubiquitinating activity.</title>
        <authorList>
            <person name="Weeks S.D."/>
            <person name="Grasty K.C."/>
            <person name="Hernandez-Cuebas L."/>
            <person name="Loll P.J."/>
        </authorList>
    </citation>
    <scope>X-RAY CRYSTALLOGRAPHY (2.7 ANGSTROMS) OF 1-190 IN COMPLEX WITH UBIQUITIN</scope>
    <scope>FUNCTION</scope>
    <scope>CATALYTIC ACTIVITY</scope>
    <scope>ACTIVE SITE</scope>
</reference>
<reference key="6">
    <citation type="journal article" date="2015" name="Oncotarget">
        <title>Ataxin-3 like (ATXN3L), a member of the Josephin family of deubiquitinating enzymes, promotes breast cancer proliferation by deubiquitinating Krueppel-like factor 5 (KLF5).</title>
        <authorList>
            <person name="Ge F."/>
            <person name="Chen W."/>
            <person name="Qin J."/>
            <person name="Zhou Z."/>
            <person name="Liu R."/>
            <person name="Liu L."/>
            <person name="Tan J."/>
            <person name="Zou T."/>
            <person name="Li H."/>
            <person name="Ren G."/>
            <person name="Chen C."/>
        </authorList>
    </citation>
    <scope>FUNCTION</scope>
    <scope>CATALYTIC ACTIVITY</scope>
</reference>
<feature type="chain" id="PRO_0000271099" description="Ataxin-3-like protein">
    <location>
        <begin position="1"/>
        <end position="355"/>
    </location>
</feature>
<feature type="domain" description="Josephin" evidence="3">
    <location>
        <begin position="1"/>
        <end position="180"/>
    </location>
</feature>
<feature type="domain" description="UIM 1" evidence="2">
    <location>
        <begin position="224"/>
        <end position="243"/>
    </location>
</feature>
<feature type="domain" description="UIM 2" evidence="2">
    <location>
        <begin position="244"/>
        <end position="258"/>
    </location>
</feature>
<feature type="region of interest" description="Disordered" evidence="4">
    <location>
        <begin position="209"/>
        <end position="230"/>
    </location>
</feature>
<feature type="region of interest" description="Disordered" evidence="4">
    <location>
        <begin position="253"/>
        <end position="331"/>
    </location>
</feature>
<feature type="compositionally biased region" description="Acidic residues" evidence="4">
    <location>
        <begin position="215"/>
        <end position="228"/>
    </location>
</feature>
<feature type="compositionally biased region" description="Polar residues" evidence="4">
    <location>
        <begin position="253"/>
        <end position="276"/>
    </location>
</feature>
<feature type="compositionally biased region" description="Basic and acidic residues" evidence="4">
    <location>
        <begin position="278"/>
        <end position="293"/>
    </location>
</feature>
<feature type="active site" description="Nucleophile" evidence="11 13">
    <location>
        <position position="14"/>
    </location>
</feature>
<feature type="active site" description="Proton acceptor" evidence="11 13">
    <location>
        <position position="119"/>
    </location>
</feature>
<feature type="active site" evidence="11 13">
    <location>
        <position position="134"/>
    </location>
</feature>
<feature type="sequence variant" id="VAR_029861" description="In dbSNP:rs16999010.">
    <original>L</original>
    <variation>F</variation>
    <location>
        <position position="266"/>
    </location>
</feature>
<feature type="sequence variant" id="VAR_029862" description="In dbSNP:rs4830842." evidence="5 6 9">
    <original>G</original>
    <variation>D</variation>
    <location>
        <position position="332"/>
    </location>
</feature>
<feature type="sequence conflict" description="In Ref. 4; BAB18799." evidence="10" ref="4">
    <original>K</original>
    <variation>M</variation>
    <location>
        <position position="101"/>
    </location>
</feature>
<feature type="sequence conflict" description="In Ref. 4; BAB18799." evidence="10" ref="4">
    <original>P</original>
    <variation>A</variation>
    <location>
        <position position="314"/>
    </location>
</feature>
<feature type="helix" evidence="14">
    <location>
        <begin position="14"/>
        <end position="23"/>
    </location>
</feature>
<feature type="helix" evidence="14">
    <location>
        <begin position="30"/>
        <end position="48"/>
    </location>
</feature>
<feature type="helix" evidence="14">
    <location>
        <begin position="49"/>
        <end position="51"/>
    </location>
</feature>
<feature type="helix" evidence="14">
    <location>
        <begin position="56"/>
        <end position="62"/>
    </location>
</feature>
<feature type="strand" evidence="14">
    <location>
        <begin position="67"/>
        <end position="69"/>
    </location>
</feature>
<feature type="helix" evidence="14">
    <location>
        <begin position="77"/>
        <end position="85"/>
    </location>
</feature>
<feature type="turn" evidence="14">
    <location>
        <begin position="86"/>
        <end position="88"/>
    </location>
</feature>
<feature type="strand" evidence="14">
    <location>
        <begin position="90"/>
        <end position="93"/>
    </location>
</feature>
<feature type="helix" evidence="14">
    <location>
        <begin position="97"/>
        <end position="101"/>
    </location>
</feature>
<feature type="helix" evidence="14">
    <location>
        <begin position="106"/>
        <end position="108"/>
    </location>
</feature>
<feature type="strand" evidence="14">
    <location>
        <begin position="111"/>
        <end position="118"/>
    </location>
</feature>
<feature type="strand" evidence="14">
    <location>
        <begin position="120"/>
        <end position="126"/>
    </location>
</feature>
<feature type="strand" evidence="14">
    <location>
        <begin position="129"/>
        <end position="132"/>
    </location>
</feature>
<feature type="strand" evidence="14">
    <location>
        <begin position="137"/>
        <end position="139"/>
    </location>
</feature>
<feature type="strand" evidence="14">
    <location>
        <begin position="141"/>
        <end position="143"/>
    </location>
</feature>
<feature type="helix" evidence="14">
    <location>
        <begin position="145"/>
        <end position="152"/>
    </location>
</feature>
<feature type="helix" evidence="14">
    <location>
        <begin position="153"/>
        <end position="156"/>
    </location>
</feature>
<feature type="strand" evidence="14">
    <location>
        <begin position="160"/>
        <end position="167"/>
    </location>
</feature>
<feature type="helix" evidence="14">
    <location>
        <begin position="173"/>
        <end position="178"/>
    </location>
</feature>
<keyword id="KW-0002">3D-structure</keyword>
<keyword id="KW-0378">Hydrolase</keyword>
<keyword id="KW-0539">Nucleus</keyword>
<keyword id="KW-0645">Protease</keyword>
<keyword id="KW-1267">Proteomics identification</keyword>
<keyword id="KW-1185">Reference proteome</keyword>
<keyword id="KW-0677">Repeat</keyword>
<keyword id="KW-0788">Thiol protease</keyword>
<keyword id="KW-0804">Transcription</keyword>
<keyword id="KW-0805">Transcription regulation</keyword>
<keyword id="KW-0833">Ubl conjugation pathway</keyword>